<gene>
    <name evidence="1" type="primary">rps14</name>
    <name type="ordered locus">Mbar_A0096</name>
</gene>
<sequence length="50" mass="5869">MAETINKSGRGVNVCKRCGRKQGLVRKYDIYLCRHCFREIAHDMGFEKYS</sequence>
<protein>
    <recommendedName>
        <fullName evidence="1">Small ribosomal subunit protein uS14</fullName>
    </recommendedName>
    <alternativeName>
        <fullName evidence="2">30S ribosomal protein S14 type Z</fullName>
    </alternativeName>
</protein>
<feature type="chain" id="PRO_0000269163" description="Small ribosomal subunit protein uS14">
    <location>
        <begin position="1"/>
        <end position="50"/>
    </location>
</feature>
<feature type="binding site" evidence="1">
    <location>
        <position position="15"/>
    </location>
    <ligand>
        <name>Zn(2+)</name>
        <dbReference type="ChEBI" id="CHEBI:29105"/>
    </ligand>
</feature>
<feature type="binding site" evidence="1">
    <location>
        <position position="18"/>
    </location>
    <ligand>
        <name>Zn(2+)</name>
        <dbReference type="ChEBI" id="CHEBI:29105"/>
    </ligand>
</feature>
<feature type="binding site" evidence="1">
    <location>
        <position position="33"/>
    </location>
    <ligand>
        <name>Zn(2+)</name>
        <dbReference type="ChEBI" id="CHEBI:29105"/>
    </ligand>
</feature>
<feature type="binding site" evidence="1">
    <location>
        <position position="36"/>
    </location>
    <ligand>
        <name>Zn(2+)</name>
        <dbReference type="ChEBI" id="CHEBI:29105"/>
    </ligand>
</feature>
<reference key="1">
    <citation type="journal article" date="2006" name="J. Bacteriol.">
        <title>The Methanosarcina barkeri genome: comparative analysis with Methanosarcina acetivorans and Methanosarcina mazei reveals extensive rearrangement within methanosarcinal genomes.</title>
        <authorList>
            <person name="Maeder D.L."/>
            <person name="Anderson I."/>
            <person name="Brettin T.S."/>
            <person name="Bruce D.C."/>
            <person name="Gilna P."/>
            <person name="Han C.S."/>
            <person name="Lapidus A."/>
            <person name="Metcalf W.W."/>
            <person name="Saunders E."/>
            <person name="Tapia R."/>
            <person name="Sowers K.R."/>
        </authorList>
    </citation>
    <scope>NUCLEOTIDE SEQUENCE [LARGE SCALE GENOMIC DNA]</scope>
    <source>
        <strain>Fusaro / DSM 804</strain>
    </source>
</reference>
<evidence type="ECO:0000255" key="1">
    <source>
        <dbReference type="HAMAP-Rule" id="MF_01364"/>
    </source>
</evidence>
<evidence type="ECO:0000305" key="2"/>
<keyword id="KW-0479">Metal-binding</keyword>
<keyword id="KW-0687">Ribonucleoprotein</keyword>
<keyword id="KW-0689">Ribosomal protein</keyword>
<keyword id="KW-0694">RNA-binding</keyword>
<keyword id="KW-0699">rRNA-binding</keyword>
<keyword id="KW-0862">Zinc</keyword>
<proteinExistence type="inferred from homology"/>
<dbReference type="EMBL" id="CP000099">
    <property type="protein sequence ID" value="AAZ69083.1"/>
    <property type="molecule type" value="Genomic_DNA"/>
</dbReference>
<dbReference type="SMR" id="Q46GA9"/>
<dbReference type="STRING" id="269797.Mbar_A0096"/>
<dbReference type="PaxDb" id="269797-Mbar_A0096"/>
<dbReference type="KEGG" id="mba:Mbar_A0096"/>
<dbReference type="eggNOG" id="arCOG00782">
    <property type="taxonomic scope" value="Archaea"/>
</dbReference>
<dbReference type="HOGENOM" id="CLU_177289_2_2_2"/>
<dbReference type="OrthoDB" id="5615at2157"/>
<dbReference type="GO" id="GO:0022627">
    <property type="term" value="C:cytosolic small ribosomal subunit"/>
    <property type="evidence" value="ECO:0007669"/>
    <property type="project" value="TreeGrafter"/>
</dbReference>
<dbReference type="GO" id="GO:0019843">
    <property type="term" value="F:rRNA binding"/>
    <property type="evidence" value="ECO:0007669"/>
    <property type="project" value="UniProtKB-UniRule"/>
</dbReference>
<dbReference type="GO" id="GO:0003735">
    <property type="term" value="F:structural constituent of ribosome"/>
    <property type="evidence" value="ECO:0007669"/>
    <property type="project" value="InterPro"/>
</dbReference>
<dbReference type="GO" id="GO:0008270">
    <property type="term" value="F:zinc ion binding"/>
    <property type="evidence" value="ECO:0007669"/>
    <property type="project" value="UniProtKB-UniRule"/>
</dbReference>
<dbReference type="GO" id="GO:0002181">
    <property type="term" value="P:cytoplasmic translation"/>
    <property type="evidence" value="ECO:0007669"/>
    <property type="project" value="TreeGrafter"/>
</dbReference>
<dbReference type="FunFam" id="4.10.830.10:FF:000002">
    <property type="entry name" value="40S ribosomal protein S29"/>
    <property type="match status" value="1"/>
</dbReference>
<dbReference type="Gene3D" id="4.10.830.10">
    <property type="entry name" value="30s Ribosomal Protein S14, Chain N"/>
    <property type="match status" value="1"/>
</dbReference>
<dbReference type="HAMAP" id="MF_01364_A">
    <property type="entry name" value="Ribosomal_uS14_2_A"/>
    <property type="match status" value="1"/>
</dbReference>
<dbReference type="InterPro" id="IPR001209">
    <property type="entry name" value="Ribosomal_uS14"/>
</dbReference>
<dbReference type="InterPro" id="IPR023676">
    <property type="entry name" value="Ribosomal_uS14_arc"/>
</dbReference>
<dbReference type="InterPro" id="IPR018271">
    <property type="entry name" value="Ribosomal_uS14_CS"/>
</dbReference>
<dbReference type="InterPro" id="IPR039744">
    <property type="entry name" value="RIbosomal_uS14_euk_arc"/>
</dbReference>
<dbReference type="InterPro" id="IPR043140">
    <property type="entry name" value="Ribosomal_uS14_sf"/>
</dbReference>
<dbReference type="NCBIfam" id="NF004424">
    <property type="entry name" value="PRK05766.1"/>
    <property type="match status" value="1"/>
</dbReference>
<dbReference type="PANTHER" id="PTHR12010">
    <property type="entry name" value="40S RIBOSOMAL PROTEIN S29"/>
    <property type="match status" value="1"/>
</dbReference>
<dbReference type="PANTHER" id="PTHR12010:SF2">
    <property type="entry name" value="40S RIBOSOMAL PROTEIN S29"/>
    <property type="match status" value="1"/>
</dbReference>
<dbReference type="Pfam" id="PF00253">
    <property type="entry name" value="Ribosomal_S14"/>
    <property type="match status" value="1"/>
</dbReference>
<dbReference type="SUPFAM" id="SSF57716">
    <property type="entry name" value="Glucocorticoid receptor-like (DNA-binding domain)"/>
    <property type="match status" value="1"/>
</dbReference>
<dbReference type="PROSITE" id="PS00527">
    <property type="entry name" value="RIBOSOMAL_S14"/>
    <property type="match status" value="1"/>
</dbReference>
<organism>
    <name type="scientific">Methanosarcina barkeri (strain Fusaro / DSM 804)</name>
    <dbReference type="NCBI Taxonomy" id="269797"/>
    <lineage>
        <taxon>Archaea</taxon>
        <taxon>Methanobacteriati</taxon>
        <taxon>Methanobacteriota</taxon>
        <taxon>Stenosarchaea group</taxon>
        <taxon>Methanomicrobia</taxon>
        <taxon>Methanosarcinales</taxon>
        <taxon>Methanosarcinaceae</taxon>
        <taxon>Methanosarcina</taxon>
    </lineage>
</organism>
<comment type="function">
    <text evidence="1">Binds 16S rRNA, required for the assembly of 30S particles.</text>
</comment>
<comment type="cofactor">
    <cofactor evidence="1">
        <name>Zn(2+)</name>
        <dbReference type="ChEBI" id="CHEBI:29105"/>
    </cofactor>
    <text evidence="1">Binds 1 zinc ion per subunit.</text>
</comment>
<comment type="subunit">
    <text evidence="1">Part of the 30S ribosomal subunit.</text>
</comment>
<comment type="similarity">
    <text evidence="1">Belongs to the universal ribosomal protein uS14 family. Zinc-binding uS14 subfamily.</text>
</comment>
<name>RS14Z_METBF</name>
<accession>Q46GA9</accession>